<organism>
    <name type="scientific">Homo sapiens</name>
    <name type="common">Human</name>
    <dbReference type="NCBI Taxonomy" id="9606"/>
    <lineage>
        <taxon>Eukaryota</taxon>
        <taxon>Metazoa</taxon>
        <taxon>Chordata</taxon>
        <taxon>Craniata</taxon>
        <taxon>Vertebrata</taxon>
        <taxon>Euteleostomi</taxon>
        <taxon>Mammalia</taxon>
        <taxon>Eutheria</taxon>
        <taxon>Euarchontoglires</taxon>
        <taxon>Primates</taxon>
        <taxon>Haplorrhini</taxon>
        <taxon>Catarrhini</taxon>
        <taxon>Hominidae</taxon>
        <taxon>Homo</taxon>
    </lineage>
</organism>
<name>NOE3_HUMAN</name>
<proteinExistence type="evidence at protein level"/>
<gene>
    <name type="primary">OLFM3</name>
    <name type="synonym">NOE3</name>
    <name type="ORF">UNQ1924/PRO4399</name>
</gene>
<dbReference type="EMBL" id="AF397392">
    <property type="protein sequence ID" value="AAK97473.1"/>
    <property type="molecule type" value="mRNA"/>
</dbReference>
<dbReference type="EMBL" id="AF397393">
    <property type="protein sequence ID" value="AAK97474.1"/>
    <property type="molecule type" value="mRNA"/>
</dbReference>
<dbReference type="EMBL" id="AF397394">
    <property type="protein sequence ID" value="AAK97475.1"/>
    <property type="molecule type" value="mRNA"/>
</dbReference>
<dbReference type="EMBL" id="AF397395">
    <property type="protein sequence ID" value="AAK97476.1"/>
    <property type="molecule type" value="mRNA"/>
</dbReference>
<dbReference type="EMBL" id="AF397396">
    <property type="protein sequence ID" value="AAK97477.1"/>
    <property type="molecule type" value="mRNA"/>
</dbReference>
<dbReference type="EMBL" id="AF397397">
    <property type="protein sequence ID" value="AAK97478.1"/>
    <property type="molecule type" value="mRNA"/>
</dbReference>
<dbReference type="EMBL" id="AY358722">
    <property type="protein sequence ID" value="AAQ89084.1"/>
    <property type="molecule type" value="mRNA"/>
</dbReference>
<dbReference type="EMBL" id="AK095724">
    <property type="protein sequence ID" value="BAG53115.1"/>
    <property type="molecule type" value="mRNA"/>
</dbReference>
<dbReference type="EMBL" id="AL356280">
    <property type="status" value="NOT_ANNOTATED_CDS"/>
    <property type="molecule type" value="Genomic_DNA"/>
</dbReference>
<dbReference type="EMBL" id="AL359760">
    <property type="status" value="NOT_ANNOTATED_CDS"/>
    <property type="molecule type" value="Genomic_DNA"/>
</dbReference>
<dbReference type="EMBL" id="CH471097">
    <property type="protein sequence ID" value="EAW72922.1"/>
    <property type="molecule type" value="Genomic_DNA"/>
</dbReference>
<dbReference type="EMBL" id="BC022531">
    <property type="protein sequence ID" value="AAH22531.1"/>
    <property type="molecule type" value="mRNA"/>
</dbReference>
<dbReference type="EMBL" id="BK001429">
    <property type="protein sequence ID" value="DAA01551.1"/>
    <property type="molecule type" value="Genomic_DNA"/>
</dbReference>
<dbReference type="EMBL" id="BK001429">
    <property type="protein sequence ID" value="DAA01553.1"/>
    <property type="molecule type" value="Genomic_DNA"/>
</dbReference>
<dbReference type="EMBL" id="BK001429">
    <property type="protein sequence ID" value="DAA01554.1"/>
    <property type="molecule type" value="Genomic_DNA"/>
</dbReference>
<dbReference type="EMBL" id="BK001429">
    <property type="protein sequence ID" value="DAA01555.1"/>
    <property type="molecule type" value="Genomic_DNA"/>
</dbReference>
<dbReference type="EMBL" id="BK001429">
    <property type="protein sequence ID" value="DAA01556.1"/>
    <property type="molecule type" value="Genomic_DNA"/>
</dbReference>
<dbReference type="CCDS" id="CCDS30781.1">
    <molecule id="Q96PB7-3"/>
</dbReference>
<dbReference type="CCDS" id="CCDS72832.1">
    <molecule id="Q96PB7-1"/>
</dbReference>
<dbReference type="RefSeq" id="NP_001275750.1">
    <molecule id="Q96PB7-1"/>
    <property type="nucleotide sequence ID" value="NM_001288821.2"/>
</dbReference>
<dbReference type="RefSeq" id="NP_001275752.1">
    <molecule id="Q96PB7-5"/>
    <property type="nucleotide sequence ID" value="NM_001288823.2"/>
</dbReference>
<dbReference type="RefSeq" id="NP_477518.2">
    <molecule id="Q96PB7-3"/>
    <property type="nucleotide sequence ID" value="NM_058170.4"/>
</dbReference>
<dbReference type="RefSeq" id="XP_016855729.1">
    <property type="nucleotide sequence ID" value="XM_017000240.1"/>
</dbReference>
<dbReference type="RefSeq" id="XP_047300341.1">
    <molecule id="Q96PB7-5"/>
    <property type="nucleotide sequence ID" value="XM_047444385.1"/>
</dbReference>
<dbReference type="SMR" id="Q96PB7"/>
<dbReference type="BioGRID" id="125601">
    <property type="interactions" value="22"/>
</dbReference>
<dbReference type="FunCoup" id="Q96PB7">
    <property type="interactions" value="308"/>
</dbReference>
<dbReference type="IntAct" id="Q96PB7">
    <property type="interactions" value="13"/>
</dbReference>
<dbReference type="STRING" id="9606.ENSP00000345192"/>
<dbReference type="GlyCosmos" id="Q96PB7">
    <property type="glycosylation" value="5 sites, No reported glycans"/>
</dbReference>
<dbReference type="GlyGen" id="Q96PB7">
    <property type="glycosylation" value="6 sites, 1 O-linked glycan (1 site)"/>
</dbReference>
<dbReference type="iPTMnet" id="Q96PB7"/>
<dbReference type="PhosphoSitePlus" id="Q96PB7"/>
<dbReference type="BioMuta" id="OLFM3"/>
<dbReference type="DMDM" id="20139068"/>
<dbReference type="MassIVE" id="Q96PB7"/>
<dbReference type="PaxDb" id="9606-ENSP00000345192"/>
<dbReference type="PeptideAtlas" id="Q96PB7"/>
<dbReference type="ProteomicsDB" id="77652">
    <molecule id="Q96PB7-1"/>
</dbReference>
<dbReference type="ProteomicsDB" id="77653">
    <molecule id="Q96PB7-2"/>
</dbReference>
<dbReference type="ProteomicsDB" id="77654">
    <molecule id="Q96PB7-3"/>
</dbReference>
<dbReference type="ProteomicsDB" id="77655">
    <molecule id="Q96PB7-4"/>
</dbReference>
<dbReference type="ProteomicsDB" id="77656">
    <molecule id="Q96PB7-5"/>
</dbReference>
<dbReference type="ProteomicsDB" id="77657">
    <molecule id="Q96PB7-6"/>
</dbReference>
<dbReference type="Antibodypedia" id="33701">
    <property type="antibodies" value="154 antibodies from 22 providers"/>
</dbReference>
<dbReference type="DNASU" id="118427"/>
<dbReference type="Ensembl" id="ENST00000338858.9">
    <molecule id="Q96PB7-1"/>
    <property type="protein sequence ID" value="ENSP00000345192.5"/>
    <property type="gene ID" value="ENSG00000118733.17"/>
</dbReference>
<dbReference type="Ensembl" id="ENST00000370103.9">
    <molecule id="Q96PB7-3"/>
    <property type="protein sequence ID" value="ENSP00000359121.5"/>
    <property type="gene ID" value="ENSG00000118733.17"/>
</dbReference>
<dbReference type="Ensembl" id="ENST00000536598.1">
    <molecule id="Q96PB7-6"/>
    <property type="protein sequence ID" value="ENSP00000443471.1"/>
    <property type="gene ID" value="ENSG00000118733.17"/>
</dbReference>
<dbReference type="GeneID" id="118427"/>
<dbReference type="KEGG" id="hsa:118427"/>
<dbReference type="MANE-Select" id="ENST00000370103.9">
    <molecule id="Q96PB7-3"/>
    <property type="protein sequence ID" value="ENSP00000359121.5"/>
    <property type="RefSeq nucleotide sequence ID" value="NM_058170.4"/>
    <property type="RefSeq protein sequence ID" value="NP_477518.2"/>
</dbReference>
<dbReference type="UCSC" id="uc001duf.4">
    <molecule id="Q96PB7-1"/>
    <property type="organism name" value="human"/>
</dbReference>
<dbReference type="AGR" id="HGNC:17990"/>
<dbReference type="CTD" id="118427"/>
<dbReference type="DisGeNET" id="118427"/>
<dbReference type="GeneCards" id="OLFM3"/>
<dbReference type="HGNC" id="HGNC:17990">
    <property type="gene designation" value="OLFM3"/>
</dbReference>
<dbReference type="HPA" id="ENSG00000118733">
    <property type="expression patterns" value="Group enriched (brain, retina)"/>
</dbReference>
<dbReference type="MIM" id="607567">
    <property type="type" value="gene"/>
</dbReference>
<dbReference type="neXtProt" id="NX_Q96PB7"/>
<dbReference type="OpenTargets" id="ENSG00000118733"/>
<dbReference type="PharmGKB" id="PA31917"/>
<dbReference type="VEuPathDB" id="HostDB:ENSG00000118733"/>
<dbReference type="eggNOG" id="KOG3545">
    <property type="taxonomic scope" value="Eukaryota"/>
</dbReference>
<dbReference type="GeneTree" id="ENSGT00940000156998"/>
<dbReference type="HOGENOM" id="CLU_035236_0_0_1"/>
<dbReference type="InParanoid" id="Q96PB7"/>
<dbReference type="OMA" id="XELKEKM"/>
<dbReference type="OrthoDB" id="8626508at2759"/>
<dbReference type="PAN-GO" id="Q96PB7">
    <property type="GO annotations" value="2 GO annotations based on evolutionary models"/>
</dbReference>
<dbReference type="PhylomeDB" id="Q96PB7"/>
<dbReference type="TreeFam" id="TF315964"/>
<dbReference type="PathwayCommons" id="Q96PB7"/>
<dbReference type="SignaLink" id="Q96PB7"/>
<dbReference type="BioGRID-ORCS" id="118427">
    <property type="hits" value="12 hits in 1147 CRISPR screens"/>
</dbReference>
<dbReference type="ChiTaRS" id="OLFM3">
    <property type="organism name" value="human"/>
</dbReference>
<dbReference type="GeneWiki" id="OLFM3"/>
<dbReference type="GenomeRNAi" id="118427"/>
<dbReference type="Pharos" id="Q96PB7">
    <property type="development level" value="Tbio"/>
</dbReference>
<dbReference type="PRO" id="PR:Q96PB7"/>
<dbReference type="Proteomes" id="UP000005640">
    <property type="component" value="Chromosome 1"/>
</dbReference>
<dbReference type="RNAct" id="Q96PB7">
    <property type="molecule type" value="protein"/>
</dbReference>
<dbReference type="Bgee" id="ENSG00000118733">
    <property type="expression patterns" value="Expressed in endothelial cell and 87 other cell types or tissues"/>
</dbReference>
<dbReference type="ExpressionAtlas" id="Q96PB7">
    <property type="expression patterns" value="baseline and differential"/>
</dbReference>
<dbReference type="GO" id="GO:0032281">
    <property type="term" value="C:AMPA glutamate receptor complex"/>
    <property type="evidence" value="ECO:0007669"/>
    <property type="project" value="Ensembl"/>
</dbReference>
<dbReference type="GO" id="GO:0005615">
    <property type="term" value="C:extracellular space"/>
    <property type="evidence" value="ECO:0000318"/>
    <property type="project" value="GO_Central"/>
</dbReference>
<dbReference type="GO" id="GO:0005794">
    <property type="term" value="C:Golgi apparatus"/>
    <property type="evidence" value="ECO:0007669"/>
    <property type="project" value="Ensembl"/>
</dbReference>
<dbReference type="GO" id="GO:0045202">
    <property type="term" value="C:synapse"/>
    <property type="evidence" value="ECO:0007669"/>
    <property type="project" value="UniProtKB-SubCell"/>
</dbReference>
<dbReference type="GO" id="GO:0042462">
    <property type="term" value="P:eye photoreceptor cell development"/>
    <property type="evidence" value="ECO:0007669"/>
    <property type="project" value="Ensembl"/>
</dbReference>
<dbReference type="GO" id="GO:0007165">
    <property type="term" value="P:signal transduction"/>
    <property type="evidence" value="ECO:0000318"/>
    <property type="project" value="GO_Central"/>
</dbReference>
<dbReference type="InterPro" id="IPR022082">
    <property type="entry name" value="Noelin_dom"/>
</dbReference>
<dbReference type="InterPro" id="IPR003112">
    <property type="entry name" value="Olfac-like_dom"/>
</dbReference>
<dbReference type="InterPro" id="IPR050605">
    <property type="entry name" value="Olfactomedin-like_domain"/>
</dbReference>
<dbReference type="InterPro" id="IPR011044">
    <property type="entry name" value="Quino_amine_DH_bsu"/>
</dbReference>
<dbReference type="PANTHER" id="PTHR23192:SF36">
    <property type="entry name" value="NOELIN-3"/>
    <property type="match status" value="1"/>
</dbReference>
<dbReference type="PANTHER" id="PTHR23192">
    <property type="entry name" value="OLFACTOMEDIN-RELATED"/>
    <property type="match status" value="1"/>
</dbReference>
<dbReference type="Pfam" id="PF12308">
    <property type="entry name" value="Noelin-1"/>
    <property type="match status" value="1"/>
</dbReference>
<dbReference type="Pfam" id="PF02191">
    <property type="entry name" value="OLF"/>
    <property type="match status" value="1"/>
</dbReference>
<dbReference type="SMART" id="SM00284">
    <property type="entry name" value="OLF"/>
    <property type="match status" value="1"/>
</dbReference>
<dbReference type="SUPFAM" id="SSF50969">
    <property type="entry name" value="YVTN repeat-like/Quinoprotein amine dehydrogenase"/>
    <property type="match status" value="1"/>
</dbReference>
<dbReference type="PROSITE" id="PS51132">
    <property type="entry name" value="OLF"/>
    <property type="match status" value="1"/>
</dbReference>
<comment type="subunit">
    <text evidence="1 5">Peripherally associated with AMPAR complex. AMPAR complex consists of an inner core made of 4 pore-forming GluA/GRIA proteins (GRIA1, GRIA2, GRIA3 and GRIA4) and 4 major auxiliary subunits arranged in a twofold symmetry. One of the two pairs of distinct binding sites is occupied either by CNIH2, CNIH3 or CACNG2, CACNG3. The other harbors CACNG2, CACNG3, CACNG4, CACNG8 or GSG1L. This inner core of AMPAR complex is complemented by outer core constituents binding directly to the GluA/GRIA proteins at sites distinct from the interaction sites of the inner core constituents. Outer core constituents include at least PRRT1, PRRT2, CKAMP44/SHISA9, FRRS1L and NRN1. The proteins of the inner and outer core serve as a platform for other, more peripherally associated AMPAR constituents, including OLFM3. Alone or in combination, these auxiliary subunits control the gating and pharmacology of the AMPAR complex and profoundly impact their biogenesis and protein processing. Homodimer. Interacts with MYOC (By similarity). Interacts with OLFM2 (PubMed:21228389).</text>
</comment>
<comment type="interaction">
    <interactant intactId="EBI-10292253">
        <id>Q96PB7</id>
    </interactant>
    <interactant intactId="EBI-10173507">
        <id>Q6UY14-3</id>
        <label>ADAMTSL4</label>
    </interactant>
    <organismsDiffer>false</organismsDiffer>
    <experiments>3</experiments>
</comment>
<comment type="interaction">
    <interactant intactId="EBI-10292253">
        <id>Q96PB7</id>
    </interactant>
    <interactant intactId="EBI-374781">
        <id>O76003</id>
        <label>GLRX3</label>
    </interactant>
    <organismsDiffer>false</organismsDiffer>
    <experiments>3</experiments>
</comment>
<comment type="interaction">
    <interactant intactId="EBI-10292253">
        <id>Q96PB7</id>
    </interactant>
    <interactant intactId="EBI-357085">
        <id>Q9UNE7</id>
        <label>STUB1</label>
    </interactant>
    <organismsDiffer>false</organismsDiffer>
    <experiments>4</experiments>
</comment>
<comment type="interaction">
    <interactant intactId="EBI-12005356">
        <id>Q96PB7-3</id>
    </interactant>
    <interactant intactId="EBI-1176455">
        <id>P63172</id>
        <label>DYNLT1</label>
    </interactant>
    <organismsDiffer>false</organismsDiffer>
    <experiments>3</experiments>
</comment>
<comment type="interaction">
    <interactant intactId="EBI-12005356">
        <id>Q96PB7-3</id>
    </interactant>
    <interactant intactId="EBI-16439278">
        <id>Q6FHY5</id>
        <label>MEOX2</label>
    </interactant>
    <organismsDiffer>false</organismsDiffer>
    <experiments>3</experiments>
</comment>
<comment type="interaction">
    <interactant intactId="EBI-12005356">
        <id>Q96PB7-3</id>
    </interactant>
    <interactant intactId="EBI-357085">
        <id>Q9UNE7</id>
        <label>STUB1</label>
    </interactant>
    <organismsDiffer>false</organismsDiffer>
    <experiments>3</experiments>
</comment>
<comment type="interaction">
    <interactant intactId="EBI-12005356">
        <id>Q96PB7-3</id>
    </interactant>
    <interactant intactId="EBI-13636688">
        <id>P15884-3</id>
        <label>TCF4</label>
    </interactant>
    <organismsDiffer>false</organismsDiffer>
    <experiments>3</experiments>
</comment>
<comment type="subcellular location">
    <subcellularLocation>
        <location evidence="1">Secreted</location>
    </subcellularLocation>
    <subcellularLocation>
        <location evidence="1">Synapse</location>
    </subcellularLocation>
</comment>
<comment type="alternative products">
    <event type="alternative splicing"/>
    <isoform>
        <id>Q96PB7-1</id>
        <name>1</name>
        <sequence type="displayed"/>
    </isoform>
    <isoform>
        <id>Q96PB7-2</id>
        <name>2</name>
        <sequence type="described" ref="VSP_003771 VSP_003772"/>
    </isoform>
    <isoform>
        <id>Q96PB7-3</id>
        <name>3</name>
        <sequence type="described" ref="VSP_003769"/>
    </isoform>
    <isoform>
        <id>Q96PB7-4</id>
        <name>4</name>
        <sequence type="described" ref="VSP_003769 VSP_003771 VSP_003772"/>
    </isoform>
    <isoform>
        <id>Q96PB7-5</id>
        <name>5</name>
        <sequence type="described" ref="VSP_003770"/>
    </isoform>
    <isoform>
        <id>Q96PB7-6</id>
        <name>6</name>
        <sequence type="described" ref="VSP_003770 VSP_003771 VSP_003772"/>
    </isoform>
</comment>
<comment type="tissue specificity">
    <text evidence="4">In the eye, expressed in trabecular meshwork and neural retina; in non-ocular tissues, expressed in brain and lung.</text>
</comment>
<feature type="signal peptide" evidence="2">
    <location>
        <begin position="1"/>
        <end position="23"/>
    </location>
</feature>
<feature type="chain" id="PRO_0000020080" description="Noelin-3">
    <location>
        <begin position="24"/>
        <end position="478"/>
    </location>
</feature>
<feature type="domain" description="Olfactomedin-like" evidence="3">
    <location>
        <begin position="218"/>
        <end position="470"/>
    </location>
</feature>
<feature type="coiled-coil region" evidence="2">
    <location>
        <begin position="77"/>
        <end position="217"/>
    </location>
</feature>
<feature type="glycosylation site" description="N-linked (GlcNAc...) asparagine" evidence="2">
    <location>
        <position position="33"/>
    </location>
</feature>
<feature type="glycosylation site" description="N-linked (GlcNAc...) asparagine" evidence="2">
    <location>
        <position position="95"/>
    </location>
</feature>
<feature type="glycosylation site" description="N-linked (GlcNAc...) asparagine" evidence="2">
    <location>
        <position position="179"/>
    </location>
</feature>
<feature type="glycosylation site" description="N-linked (GlcNAc...) asparagine" evidence="2">
    <location>
        <position position="299"/>
    </location>
</feature>
<feature type="glycosylation site" description="N-linked (GlcNAc...) asparagine" evidence="2">
    <location>
        <position position="465"/>
    </location>
</feature>
<feature type="disulfide bond" evidence="3">
    <location>
        <begin position="219"/>
        <end position="401"/>
    </location>
</feature>
<feature type="splice variant" id="VSP_003770" description="In isoform 5 and isoform 6." evidence="7">
    <location>
        <begin position="1"/>
        <end position="95"/>
    </location>
</feature>
<feature type="splice variant" id="VSP_003769" description="In isoform 3 and isoform 4." evidence="6 7">
    <original>MSPPLLKLGAVLSTMAMISNWMSQTLPSLVGLNTTRLSTPDTL</original>
    <variation>MQATSNLLNLLLLSLFAGLDPSK</variation>
    <location>
        <begin position="1"/>
        <end position="43"/>
    </location>
</feature>
<feature type="splice variant" id="VSP_003771" description="In isoform 2, isoform 4 and isoform 6." evidence="7">
    <original>TCGKLMKITGPVTVKTSG</original>
    <variation>IDLKKRKEEEKRQQKGEA</variation>
    <location>
        <begin position="218"/>
        <end position="235"/>
    </location>
</feature>
<feature type="splice variant" id="VSP_003772" description="In isoform 2, isoform 4 and isoform 6." evidence="7">
    <location>
        <begin position="236"/>
        <end position="478"/>
    </location>
</feature>
<feature type="sequence conflict" description="In Ref. 6; AAH22531." evidence="8" ref="6">
    <original>Q</original>
    <variation>K</variation>
    <location>
        <position position="88"/>
    </location>
</feature>
<feature type="sequence conflict" description="In Ref. 6; AAH22531." evidence="8" ref="6">
    <original>Y</original>
    <variation>C</variation>
    <location>
        <position position="454"/>
    </location>
</feature>
<sequence>MSPPLLKLGAVLSTMAMISNWMSQTLPSLVGLNTTRLSTPDTLTQISPKEGWQVYSSAQDPDGRCICTVVAPEQNLCSRDAKSRQLRQLLEKVQNMSQSIEVLNLRTQRDFQYVLKMETQMKGLKAKFRQIEDDRKTLMTKHFQELKEKMDELLPLIPVLEQYKTDAKLITQFKEEIRNLSAVLTGIQEEIGAYDYEELHQRVLSLETRLRDCMKKLTCGKLMKITGPVTVKTSGTRFGAWMTDPLASEKNNRVWYMDSYTNNKIVREYKSIADFVSGAESRTYNLPFKWAGTNHVVYNGSLYFNKYQSNIIIKYSFDMGRVLAQRSLEYAGFHNVYPYTWGGFSDIDLMADEIGLWAVYATNQNAGNIVISQLNQDTLEVMKSWSTGYPKRSAGESFMICGTLYVTNSHLTGAKVYYSYSTKTSTYEYTDIPFHNQYFHISMLDYNARDRALYAWNNGHQVLFNVTLFHIIKTEDDT</sequence>
<accession>Q96PB7</accession>
<accession>Q5T3V6</accession>
<accession>Q6IMI7</accession>
<accession>Q6IMI8</accession>
<accession>Q6IMI9</accession>
<accession>Q6IMJ1</accession>
<accession>Q8TBG1</accession>
<accession>Q96PB2</accession>
<accession>Q96PB3</accession>
<accession>Q96PB4</accession>
<accession>Q96PB5</accession>
<accession>Q96PB6</accession>
<protein>
    <recommendedName>
        <fullName>Noelin-3</fullName>
    </recommendedName>
    <alternativeName>
        <fullName>Olfactomedin-3</fullName>
    </alternativeName>
    <alternativeName>
        <fullName>Optimedin</fullName>
    </alternativeName>
</protein>
<reference key="1">
    <citation type="submission" date="2001-09" db="EMBL/GenBank/DDBJ databases">
        <title>NOE3: a novel olfactomedin/noelin/pancortin homolog identified near an ependymoma-associated translocation breakpoint.</title>
        <authorList>
            <person name="Rhodes C.H."/>
            <person name="Call K.M."/>
            <person name="Little R."/>
            <person name="Braunschweiger K."/>
            <person name="Park J.P."/>
        </authorList>
    </citation>
    <scope>NUCLEOTIDE SEQUENCE [MRNA] (ISOFORMS 1; 2; 3; 4; 5 AND 6)</scope>
</reference>
<reference key="2">
    <citation type="journal article" date="2003" name="Genome Res.">
        <title>The secreted protein discovery initiative (SPDI), a large-scale effort to identify novel human secreted and transmembrane proteins: a bioinformatics assessment.</title>
        <authorList>
            <person name="Clark H.F."/>
            <person name="Gurney A.L."/>
            <person name="Abaya E."/>
            <person name="Baker K."/>
            <person name="Baldwin D.T."/>
            <person name="Brush J."/>
            <person name="Chen J."/>
            <person name="Chow B."/>
            <person name="Chui C."/>
            <person name="Crowley C."/>
            <person name="Currell B."/>
            <person name="Deuel B."/>
            <person name="Dowd P."/>
            <person name="Eaton D."/>
            <person name="Foster J.S."/>
            <person name="Grimaldi C."/>
            <person name="Gu Q."/>
            <person name="Hass P.E."/>
            <person name="Heldens S."/>
            <person name="Huang A."/>
            <person name="Kim H.S."/>
            <person name="Klimowski L."/>
            <person name="Jin Y."/>
            <person name="Johnson S."/>
            <person name="Lee J."/>
            <person name="Lewis L."/>
            <person name="Liao D."/>
            <person name="Mark M.R."/>
            <person name="Robbie E."/>
            <person name="Sanchez C."/>
            <person name="Schoenfeld J."/>
            <person name="Seshagiri S."/>
            <person name="Simmons L."/>
            <person name="Singh J."/>
            <person name="Smith V."/>
            <person name="Stinson J."/>
            <person name="Vagts A."/>
            <person name="Vandlen R.L."/>
            <person name="Watanabe C."/>
            <person name="Wieand D."/>
            <person name="Woods K."/>
            <person name="Xie M.-H."/>
            <person name="Yansura D.G."/>
            <person name="Yi S."/>
            <person name="Yu G."/>
            <person name="Yuan J."/>
            <person name="Zhang M."/>
            <person name="Zhang Z."/>
            <person name="Goddard A.D."/>
            <person name="Wood W.I."/>
            <person name="Godowski P.J."/>
            <person name="Gray A.M."/>
        </authorList>
    </citation>
    <scope>NUCLEOTIDE SEQUENCE [LARGE SCALE MRNA] (ISOFORM 1)</scope>
</reference>
<reference key="3">
    <citation type="journal article" date="2004" name="Nat. Genet.">
        <title>Complete sequencing and characterization of 21,243 full-length human cDNAs.</title>
        <authorList>
            <person name="Ota T."/>
            <person name="Suzuki Y."/>
            <person name="Nishikawa T."/>
            <person name="Otsuki T."/>
            <person name="Sugiyama T."/>
            <person name="Irie R."/>
            <person name="Wakamatsu A."/>
            <person name="Hayashi K."/>
            <person name="Sato H."/>
            <person name="Nagai K."/>
            <person name="Kimura K."/>
            <person name="Makita H."/>
            <person name="Sekine M."/>
            <person name="Obayashi M."/>
            <person name="Nishi T."/>
            <person name="Shibahara T."/>
            <person name="Tanaka T."/>
            <person name="Ishii S."/>
            <person name="Yamamoto J."/>
            <person name="Saito K."/>
            <person name="Kawai Y."/>
            <person name="Isono Y."/>
            <person name="Nakamura Y."/>
            <person name="Nagahari K."/>
            <person name="Murakami K."/>
            <person name="Yasuda T."/>
            <person name="Iwayanagi T."/>
            <person name="Wagatsuma M."/>
            <person name="Shiratori A."/>
            <person name="Sudo H."/>
            <person name="Hosoiri T."/>
            <person name="Kaku Y."/>
            <person name="Kodaira H."/>
            <person name="Kondo H."/>
            <person name="Sugawara M."/>
            <person name="Takahashi M."/>
            <person name="Kanda K."/>
            <person name="Yokoi T."/>
            <person name="Furuya T."/>
            <person name="Kikkawa E."/>
            <person name="Omura Y."/>
            <person name="Abe K."/>
            <person name="Kamihara K."/>
            <person name="Katsuta N."/>
            <person name="Sato K."/>
            <person name="Tanikawa M."/>
            <person name="Yamazaki M."/>
            <person name="Ninomiya K."/>
            <person name="Ishibashi T."/>
            <person name="Yamashita H."/>
            <person name="Murakawa K."/>
            <person name="Fujimori K."/>
            <person name="Tanai H."/>
            <person name="Kimata M."/>
            <person name="Watanabe M."/>
            <person name="Hiraoka S."/>
            <person name="Chiba Y."/>
            <person name="Ishida S."/>
            <person name="Ono Y."/>
            <person name="Takiguchi S."/>
            <person name="Watanabe S."/>
            <person name="Yosida M."/>
            <person name="Hotuta T."/>
            <person name="Kusano J."/>
            <person name="Kanehori K."/>
            <person name="Takahashi-Fujii A."/>
            <person name="Hara H."/>
            <person name="Tanase T.-O."/>
            <person name="Nomura Y."/>
            <person name="Togiya S."/>
            <person name="Komai F."/>
            <person name="Hara R."/>
            <person name="Takeuchi K."/>
            <person name="Arita M."/>
            <person name="Imose N."/>
            <person name="Musashino K."/>
            <person name="Yuuki H."/>
            <person name="Oshima A."/>
            <person name="Sasaki N."/>
            <person name="Aotsuka S."/>
            <person name="Yoshikawa Y."/>
            <person name="Matsunawa H."/>
            <person name="Ichihara T."/>
            <person name="Shiohata N."/>
            <person name="Sano S."/>
            <person name="Moriya S."/>
            <person name="Momiyama H."/>
            <person name="Satoh N."/>
            <person name="Takami S."/>
            <person name="Terashima Y."/>
            <person name="Suzuki O."/>
            <person name="Nakagawa S."/>
            <person name="Senoh A."/>
            <person name="Mizoguchi H."/>
            <person name="Goto Y."/>
            <person name="Shimizu F."/>
            <person name="Wakebe H."/>
            <person name="Hishigaki H."/>
            <person name="Watanabe T."/>
            <person name="Sugiyama A."/>
            <person name="Takemoto M."/>
            <person name="Kawakami B."/>
            <person name="Yamazaki M."/>
            <person name="Watanabe K."/>
            <person name="Kumagai A."/>
            <person name="Itakura S."/>
            <person name="Fukuzumi Y."/>
            <person name="Fujimori Y."/>
            <person name="Komiyama M."/>
            <person name="Tashiro H."/>
            <person name="Tanigami A."/>
            <person name="Fujiwara T."/>
            <person name="Ono T."/>
            <person name="Yamada K."/>
            <person name="Fujii Y."/>
            <person name="Ozaki K."/>
            <person name="Hirao M."/>
            <person name="Ohmori Y."/>
            <person name="Kawabata A."/>
            <person name="Hikiji T."/>
            <person name="Kobatake N."/>
            <person name="Inagaki H."/>
            <person name="Ikema Y."/>
            <person name="Okamoto S."/>
            <person name="Okitani R."/>
            <person name="Kawakami T."/>
            <person name="Noguchi S."/>
            <person name="Itoh T."/>
            <person name="Shigeta K."/>
            <person name="Senba T."/>
            <person name="Matsumura K."/>
            <person name="Nakajima Y."/>
            <person name="Mizuno T."/>
            <person name="Morinaga M."/>
            <person name="Sasaki M."/>
            <person name="Togashi T."/>
            <person name="Oyama M."/>
            <person name="Hata H."/>
            <person name="Watanabe M."/>
            <person name="Komatsu T."/>
            <person name="Mizushima-Sugano J."/>
            <person name="Satoh T."/>
            <person name="Shirai Y."/>
            <person name="Takahashi Y."/>
            <person name="Nakagawa K."/>
            <person name="Okumura K."/>
            <person name="Nagase T."/>
            <person name="Nomura N."/>
            <person name="Kikuchi H."/>
            <person name="Masuho Y."/>
            <person name="Yamashita R."/>
            <person name="Nakai K."/>
            <person name="Yada T."/>
            <person name="Nakamura Y."/>
            <person name="Ohara O."/>
            <person name="Isogai T."/>
            <person name="Sugano S."/>
        </authorList>
    </citation>
    <scope>NUCLEOTIDE SEQUENCE [LARGE SCALE MRNA]</scope>
    <source>
        <tissue>Brain</tissue>
    </source>
</reference>
<reference key="4">
    <citation type="journal article" date="2006" name="Nature">
        <title>The DNA sequence and biological annotation of human chromosome 1.</title>
        <authorList>
            <person name="Gregory S.G."/>
            <person name="Barlow K.F."/>
            <person name="McLay K.E."/>
            <person name="Kaul R."/>
            <person name="Swarbreck D."/>
            <person name="Dunham A."/>
            <person name="Scott C.E."/>
            <person name="Howe K.L."/>
            <person name="Woodfine K."/>
            <person name="Spencer C.C.A."/>
            <person name="Jones M.C."/>
            <person name="Gillson C."/>
            <person name="Searle S."/>
            <person name="Zhou Y."/>
            <person name="Kokocinski F."/>
            <person name="McDonald L."/>
            <person name="Evans R."/>
            <person name="Phillips K."/>
            <person name="Atkinson A."/>
            <person name="Cooper R."/>
            <person name="Jones C."/>
            <person name="Hall R.E."/>
            <person name="Andrews T.D."/>
            <person name="Lloyd C."/>
            <person name="Ainscough R."/>
            <person name="Almeida J.P."/>
            <person name="Ambrose K.D."/>
            <person name="Anderson F."/>
            <person name="Andrew R.W."/>
            <person name="Ashwell R.I.S."/>
            <person name="Aubin K."/>
            <person name="Babbage A.K."/>
            <person name="Bagguley C.L."/>
            <person name="Bailey J."/>
            <person name="Beasley H."/>
            <person name="Bethel G."/>
            <person name="Bird C.P."/>
            <person name="Bray-Allen S."/>
            <person name="Brown J.Y."/>
            <person name="Brown A.J."/>
            <person name="Buckley D."/>
            <person name="Burton J."/>
            <person name="Bye J."/>
            <person name="Carder C."/>
            <person name="Chapman J.C."/>
            <person name="Clark S.Y."/>
            <person name="Clarke G."/>
            <person name="Clee C."/>
            <person name="Cobley V."/>
            <person name="Collier R.E."/>
            <person name="Corby N."/>
            <person name="Coville G.J."/>
            <person name="Davies J."/>
            <person name="Deadman R."/>
            <person name="Dunn M."/>
            <person name="Earthrowl M."/>
            <person name="Ellington A.G."/>
            <person name="Errington H."/>
            <person name="Frankish A."/>
            <person name="Frankland J."/>
            <person name="French L."/>
            <person name="Garner P."/>
            <person name="Garnett J."/>
            <person name="Gay L."/>
            <person name="Ghori M.R.J."/>
            <person name="Gibson R."/>
            <person name="Gilby L.M."/>
            <person name="Gillett W."/>
            <person name="Glithero R.J."/>
            <person name="Grafham D.V."/>
            <person name="Griffiths C."/>
            <person name="Griffiths-Jones S."/>
            <person name="Grocock R."/>
            <person name="Hammond S."/>
            <person name="Harrison E.S.I."/>
            <person name="Hart E."/>
            <person name="Haugen E."/>
            <person name="Heath P.D."/>
            <person name="Holmes S."/>
            <person name="Holt K."/>
            <person name="Howden P.J."/>
            <person name="Hunt A.R."/>
            <person name="Hunt S.E."/>
            <person name="Hunter G."/>
            <person name="Isherwood J."/>
            <person name="James R."/>
            <person name="Johnson C."/>
            <person name="Johnson D."/>
            <person name="Joy A."/>
            <person name="Kay M."/>
            <person name="Kershaw J.K."/>
            <person name="Kibukawa M."/>
            <person name="Kimberley A.M."/>
            <person name="King A."/>
            <person name="Knights A.J."/>
            <person name="Lad H."/>
            <person name="Laird G."/>
            <person name="Lawlor S."/>
            <person name="Leongamornlert D.A."/>
            <person name="Lloyd D.M."/>
            <person name="Loveland J."/>
            <person name="Lovell J."/>
            <person name="Lush M.J."/>
            <person name="Lyne R."/>
            <person name="Martin S."/>
            <person name="Mashreghi-Mohammadi M."/>
            <person name="Matthews L."/>
            <person name="Matthews N.S.W."/>
            <person name="McLaren S."/>
            <person name="Milne S."/>
            <person name="Mistry S."/>
            <person name="Moore M.J.F."/>
            <person name="Nickerson T."/>
            <person name="O'Dell C.N."/>
            <person name="Oliver K."/>
            <person name="Palmeiri A."/>
            <person name="Palmer S.A."/>
            <person name="Parker A."/>
            <person name="Patel D."/>
            <person name="Pearce A.V."/>
            <person name="Peck A.I."/>
            <person name="Pelan S."/>
            <person name="Phelps K."/>
            <person name="Phillimore B.J."/>
            <person name="Plumb R."/>
            <person name="Rajan J."/>
            <person name="Raymond C."/>
            <person name="Rouse G."/>
            <person name="Saenphimmachak C."/>
            <person name="Sehra H.K."/>
            <person name="Sheridan E."/>
            <person name="Shownkeen R."/>
            <person name="Sims S."/>
            <person name="Skuce C.D."/>
            <person name="Smith M."/>
            <person name="Steward C."/>
            <person name="Subramanian S."/>
            <person name="Sycamore N."/>
            <person name="Tracey A."/>
            <person name="Tromans A."/>
            <person name="Van Helmond Z."/>
            <person name="Wall M."/>
            <person name="Wallis J.M."/>
            <person name="White S."/>
            <person name="Whitehead S.L."/>
            <person name="Wilkinson J.E."/>
            <person name="Willey D.L."/>
            <person name="Williams H."/>
            <person name="Wilming L."/>
            <person name="Wray P.W."/>
            <person name="Wu Z."/>
            <person name="Coulson A."/>
            <person name="Vaudin M."/>
            <person name="Sulston J.E."/>
            <person name="Durbin R.M."/>
            <person name="Hubbard T."/>
            <person name="Wooster R."/>
            <person name="Dunham I."/>
            <person name="Carter N.P."/>
            <person name="McVean G."/>
            <person name="Ross M.T."/>
            <person name="Harrow J."/>
            <person name="Olson M.V."/>
            <person name="Beck S."/>
            <person name="Rogers J."/>
            <person name="Bentley D.R."/>
        </authorList>
    </citation>
    <scope>NUCLEOTIDE SEQUENCE [LARGE SCALE GENOMIC DNA]</scope>
</reference>
<reference key="5">
    <citation type="submission" date="2005-09" db="EMBL/GenBank/DDBJ databases">
        <authorList>
            <person name="Mural R.J."/>
            <person name="Istrail S."/>
            <person name="Sutton G.G."/>
            <person name="Florea L."/>
            <person name="Halpern A.L."/>
            <person name="Mobarry C.M."/>
            <person name="Lippert R."/>
            <person name="Walenz B."/>
            <person name="Shatkay H."/>
            <person name="Dew I."/>
            <person name="Miller J.R."/>
            <person name="Flanigan M.J."/>
            <person name="Edwards N.J."/>
            <person name="Bolanos R."/>
            <person name="Fasulo D."/>
            <person name="Halldorsson B.V."/>
            <person name="Hannenhalli S."/>
            <person name="Turner R."/>
            <person name="Yooseph S."/>
            <person name="Lu F."/>
            <person name="Nusskern D.R."/>
            <person name="Shue B.C."/>
            <person name="Zheng X.H."/>
            <person name="Zhong F."/>
            <person name="Delcher A.L."/>
            <person name="Huson D.H."/>
            <person name="Kravitz S.A."/>
            <person name="Mouchard L."/>
            <person name="Reinert K."/>
            <person name="Remington K.A."/>
            <person name="Clark A.G."/>
            <person name="Waterman M.S."/>
            <person name="Eichler E.E."/>
            <person name="Adams M.D."/>
            <person name="Hunkapiller M.W."/>
            <person name="Myers E.W."/>
            <person name="Venter J.C."/>
        </authorList>
    </citation>
    <scope>NUCLEOTIDE SEQUENCE [LARGE SCALE GENOMIC DNA]</scope>
</reference>
<reference key="6">
    <citation type="journal article" date="2004" name="Genome Res.">
        <title>The status, quality, and expansion of the NIH full-length cDNA project: the Mammalian Gene Collection (MGC).</title>
        <authorList>
            <consortium name="The MGC Project Team"/>
        </authorList>
    </citation>
    <scope>NUCLEOTIDE SEQUENCE [LARGE SCALE MRNA] (ISOFORM 3)</scope>
    <source>
        <tissue>Hippocampus</tissue>
    </source>
</reference>
<reference key="7">
    <citation type="journal article" date="2002" name="Hum. Mol. Genet.">
        <title>Optimedin: a novel olfactomedin-related protein that interacts with myocilin.</title>
        <authorList>
            <person name="Torrado M."/>
            <person name="Trivedi R."/>
            <person name="Zinovieva R."/>
            <person name="Karavanova I."/>
            <person name="Tomarev S.I."/>
        </authorList>
    </citation>
    <scope>TISSUE SPECIFICITY</scope>
</reference>
<reference key="8">
    <citation type="journal article" date="2004" name="Mol. Vis.">
        <title>Bioinformatic approaches for identification and characterization of olfactomedin related genes with a potential role in pathogenesis of ocular disorders.</title>
        <authorList>
            <person name="Mukhopadhyay A."/>
            <person name="Talukdar S."/>
            <person name="Bhattacharjee A."/>
            <person name="Ray K."/>
        </authorList>
    </citation>
    <scope>ALTERNATIVE SPLICING</scope>
</reference>
<reference key="9">
    <citation type="journal article" date="2011" name="Invest. Ophthalmol. Vis. Sci.">
        <title>Olfactomedin 2: expression in the eye and interaction with other olfactomedin domain-containing proteins.</title>
        <authorList>
            <person name="Sultana A."/>
            <person name="Nakaya N."/>
            <person name="Senatorov V.V."/>
            <person name="Tomarev S.I."/>
        </authorList>
    </citation>
    <scope>INTERACTION WITH OLFM2</scope>
</reference>
<keyword id="KW-0025">Alternative splicing</keyword>
<keyword id="KW-0175">Coiled coil</keyword>
<keyword id="KW-1015">Disulfide bond</keyword>
<keyword id="KW-0325">Glycoprotein</keyword>
<keyword id="KW-1267">Proteomics identification</keyword>
<keyword id="KW-1185">Reference proteome</keyword>
<keyword id="KW-0964">Secreted</keyword>
<keyword id="KW-0732">Signal</keyword>
<keyword id="KW-0770">Synapse</keyword>
<evidence type="ECO:0000250" key="1"/>
<evidence type="ECO:0000255" key="2"/>
<evidence type="ECO:0000255" key="3">
    <source>
        <dbReference type="PROSITE-ProRule" id="PRU00446"/>
    </source>
</evidence>
<evidence type="ECO:0000269" key="4">
    <source>
    </source>
</evidence>
<evidence type="ECO:0000269" key="5">
    <source>
    </source>
</evidence>
<evidence type="ECO:0000303" key="6">
    <source>
    </source>
</evidence>
<evidence type="ECO:0000303" key="7">
    <source ref="1"/>
</evidence>
<evidence type="ECO:0000305" key="8"/>